<comment type="function">
    <text evidence="1">Catalyzes the reduction of arsenate [As(V)] to arsenite [As(III)].</text>
</comment>
<comment type="catalytic activity">
    <reaction evidence="1">
        <text>arsenate + [thioredoxin]-dithiol + H(+) = arsenite + [thioredoxin]-disulfide + H2O</text>
        <dbReference type="Rhea" id="RHEA:43848"/>
        <dbReference type="Rhea" id="RHEA-COMP:10698"/>
        <dbReference type="Rhea" id="RHEA-COMP:10700"/>
        <dbReference type="ChEBI" id="CHEBI:15377"/>
        <dbReference type="ChEBI" id="CHEBI:15378"/>
        <dbReference type="ChEBI" id="CHEBI:29242"/>
        <dbReference type="ChEBI" id="CHEBI:29950"/>
        <dbReference type="ChEBI" id="CHEBI:48597"/>
        <dbReference type="ChEBI" id="CHEBI:50058"/>
        <dbReference type="EC" id="1.20.4.4"/>
    </reaction>
</comment>
<comment type="subcellular location">
    <subcellularLocation>
        <location evidence="1">Cytoplasm</location>
    </subcellularLocation>
</comment>
<comment type="similarity">
    <text evidence="1">Belongs to the low molecular weight phosphotyrosine protein phosphatase family. Thioredoxin-coupled ArsC subfamily.</text>
</comment>
<evidence type="ECO:0000255" key="1">
    <source>
        <dbReference type="HAMAP-Rule" id="MF_01624"/>
    </source>
</evidence>
<dbReference type="EC" id="1.20.4.4" evidence="1"/>
<dbReference type="EMBL" id="AP009351">
    <property type="protein sequence ID" value="BAF67938.1"/>
    <property type="molecule type" value="Genomic_DNA"/>
</dbReference>
<dbReference type="RefSeq" id="WP_000163235.1">
    <property type="nucleotide sequence ID" value="NZ_JBBIAE010000009.1"/>
</dbReference>
<dbReference type="SMR" id="A6QHV6"/>
<dbReference type="KEGG" id="sae:NWMN_1666"/>
<dbReference type="HOGENOM" id="CLU_071415_3_2_9"/>
<dbReference type="Proteomes" id="UP000006386">
    <property type="component" value="Chromosome"/>
</dbReference>
<dbReference type="GO" id="GO:0005737">
    <property type="term" value="C:cytoplasm"/>
    <property type="evidence" value="ECO:0007669"/>
    <property type="project" value="UniProtKB-SubCell"/>
</dbReference>
<dbReference type="GO" id="GO:0030612">
    <property type="term" value="F:arsenate reductase (thioredoxin) activity"/>
    <property type="evidence" value="ECO:0007669"/>
    <property type="project" value="UniProtKB-UniRule"/>
</dbReference>
<dbReference type="GO" id="GO:0004725">
    <property type="term" value="F:protein tyrosine phosphatase activity"/>
    <property type="evidence" value="ECO:0007669"/>
    <property type="project" value="InterPro"/>
</dbReference>
<dbReference type="GO" id="GO:0046685">
    <property type="term" value="P:response to arsenic-containing substance"/>
    <property type="evidence" value="ECO:0007669"/>
    <property type="project" value="UniProtKB-KW"/>
</dbReference>
<dbReference type="CDD" id="cd16345">
    <property type="entry name" value="LMWP_ArsC"/>
    <property type="match status" value="1"/>
</dbReference>
<dbReference type="FunFam" id="3.40.50.2300:FF:000237">
    <property type="entry name" value="Arsenate reductase"/>
    <property type="match status" value="1"/>
</dbReference>
<dbReference type="Gene3D" id="3.40.50.2300">
    <property type="match status" value="1"/>
</dbReference>
<dbReference type="HAMAP" id="MF_01624">
    <property type="entry name" value="Arsenate_reduct"/>
    <property type="match status" value="1"/>
</dbReference>
<dbReference type="InterPro" id="IPR014064">
    <property type="entry name" value="Arsenate_reductase_ArsC"/>
</dbReference>
<dbReference type="InterPro" id="IPR023485">
    <property type="entry name" value="Ptyr_pPase"/>
</dbReference>
<dbReference type="InterPro" id="IPR036196">
    <property type="entry name" value="Ptyr_pPase_sf"/>
</dbReference>
<dbReference type="NCBIfam" id="TIGR02691">
    <property type="entry name" value="arsC_pI258_fam"/>
    <property type="match status" value="1"/>
</dbReference>
<dbReference type="NCBIfam" id="NF010053">
    <property type="entry name" value="PRK13530.1"/>
    <property type="match status" value="1"/>
</dbReference>
<dbReference type="PANTHER" id="PTHR43428">
    <property type="entry name" value="ARSENATE REDUCTASE"/>
    <property type="match status" value="1"/>
</dbReference>
<dbReference type="PANTHER" id="PTHR43428:SF1">
    <property type="entry name" value="ARSENATE REDUCTASE"/>
    <property type="match status" value="1"/>
</dbReference>
<dbReference type="Pfam" id="PF01451">
    <property type="entry name" value="LMWPc"/>
    <property type="match status" value="1"/>
</dbReference>
<dbReference type="SMART" id="SM00226">
    <property type="entry name" value="LMWPc"/>
    <property type="match status" value="1"/>
</dbReference>
<dbReference type="SUPFAM" id="SSF52788">
    <property type="entry name" value="Phosphotyrosine protein phosphatases I"/>
    <property type="match status" value="1"/>
</dbReference>
<gene>
    <name evidence="1" type="primary">arsC</name>
    <name type="ordered locus">NWMN_1666</name>
</gene>
<reference key="1">
    <citation type="journal article" date="2008" name="J. Bacteriol.">
        <title>Genome sequence of Staphylococcus aureus strain Newman and comparative analysis of staphylococcal genomes: polymorphism and evolution of two major pathogenicity islands.</title>
        <authorList>
            <person name="Baba T."/>
            <person name="Bae T."/>
            <person name="Schneewind O."/>
            <person name="Takeuchi F."/>
            <person name="Hiramatsu K."/>
        </authorList>
    </citation>
    <scope>NUCLEOTIDE SEQUENCE [LARGE SCALE GENOMIC DNA]</scope>
    <source>
        <strain>Newman</strain>
    </source>
</reference>
<sequence>MTKKTIYFICTGNSCRSQMAEGWAKQILADDWNVYSAGIETHGVNPKAIEAMKEVGIDISNHTSDLIDNNIIKNSNLVVTLCSDADVNCPSLPTNVKKEHWGFDDPAGKPWSEFQRVRDEIKIAIENFKSR</sequence>
<protein>
    <recommendedName>
        <fullName evidence="1">Arsenate reductase</fullName>
        <ecNumber evidence="1">1.20.4.4</ecNumber>
    </recommendedName>
</protein>
<accession>A6QHV6</accession>
<proteinExistence type="inferred from homology"/>
<feature type="chain" id="PRO_1000073637" description="Arsenate reductase">
    <location>
        <begin position="1"/>
        <end position="131"/>
    </location>
</feature>
<feature type="active site" description="Nucleophile" evidence="1">
    <location>
        <position position="10"/>
    </location>
</feature>
<feature type="active site" description="Nucleophile" evidence="1">
    <location>
        <position position="82"/>
    </location>
</feature>
<feature type="active site" description="Nucleophile" evidence="1">
    <location>
        <position position="89"/>
    </location>
</feature>
<feature type="disulfide bond" description="Redox-active; alternate" evidence="1">
    <location>
        <begin position="10"/>
        <end position="82"/>
    </location>
</feature>
<feature type="disulfide bond" description="Redox-active; alternate" evidence="1">
    <location>
        <begin position="82"/>
        <end position="89"/>
    </location>
</feature>
<name>ARSC_STAAE</name>
<keyword id="KW-0059">Arsenical resistance</keyword>
<keyword id="KW-0963">Cytoplasm</keyword>
<keyword id="KW-1015">Disulfide bond</keyword>
<keyword id="KW-0560">Oxidoreductase</keyword>
<keyword id="KW-0676">Redox-active center</keyword>
<organism>
    <name type="scientific">Staphylococcus aureus (strain Newman)</name>
    <dbReference type="NCBI Taxonomy" id="426430"/>
    <lineage>
        <taxon>Bacteria</taxon>
        <taxon>Bacillati</taxon>
        <taxon>Bacillota</taxon>
        <taxon>Bacilli</taxon>
        <taxon>Bacillales</taxon>
        <taxon>Staphylococcaceae</taxon>
        <taxon>Staphylococcus</taxon>
    </lineage>
</organism>